<dbReference type="EMBL" id="AB010073">
    <property type="protein sequence ID" value="BAB08495.1"/>
    <property type="molecule type" value="Genomic_DNA"/>
</dbReference>
<dbReference type="EMBL" id="CP002688">
    <property type="protein sequence ID" value="AED97462.1"/>
    <property type="molecule type" value="Genomic_DNA"/>
</dbReference>
<dbReference type="RefSeq" id="NP_200948.1">
    <property type="nucleotide sequence ID" value="NM_125533.1"/>
</dbReference>
<dbReference type="SMR" id="Q9FLJ4"/>
<dbReference type="FunCoup" id="Q9FLJ4">
    <property type="interactions" value="3"/>
</dbReference>
<dbReference type="PaxDb" id="3702-AT5G61400.1"/>
<dbReference type="ProteomicsDB" id="249321"/>
<dbReference type="EnsemblPlants" id="AT5G61400.1">
    <property type="protein sequence ID" value="AT5G61400.1"/>
    <property type="gene ID" value="AT5G61400"/>
</dbReference>
<dbReference type="GeneID" id="836261"/>
<dbReference type="Gramene" id="AT5G61400.1">
    <property type="protein sequence ID" value="AT5G61400.1"/>
    <property type="gene ID" value="AT5G61400"/>
</dbReference>
<dbReference type="KEGG" id="ath:AT5G61400"/>
<dbReference type="Araport" id="AT5G61400"/>
<dbReference type="TAIR" id="AT5G61400"/>
<dbReference type="eggNOG" id="KOG4197">
    <property type="taxonomic scope" value="Eukaryota"/>
</dbReference>
<dbReference type="HOGENOM" id="CLU_002706_49_12_1"/>
<dbReference type="InParanoid" id="Q9FLJ4"/>
<dbReference type="OMA" id="YTTMICA"/>
<dbReference type="PhylomeDB" id="Q9FLJ4"/>
<dbReference type="PRO" id="PR:Q9FLJ4"/>
<dbReference type="Proteomes" id="UP000006548">
    <property type="component" value="Chromosome 5"/>
</dbReference>
<dbReference type="ExpressionAtlas" id="Q9FLJ4">
    <property type="expression patterns" value="baseline and differential"/>
</dbReference>
<dbReference type="Gene3D" id="1.25.40.10">
    <property type="entry name" value="Tetratricopeptide repeat domain"/>
    <property type="match status" value="5"/>
</dbReference>
<dbReference type="InterPro" id="IPR002885">
    <property type="entry name" value="Pentatricopeptide_rpt"/>
</dbReference>
<dbReference type="InterPro" id="IPR011990">
    <property type="entry name" value="TPR-like_helical_dom_sf"/>
</dbReference>
<dbReference type="NCBIfam" id="TIGR00756">
    <property type="entry name" value="PPR"/>
    <property type="match status" value="10"/>
</dbReference>
<dbReference type="PANTHER" id="PTHR47938:SF46">
    <property type="entry name" value="PENTACOTRIPEPTIDE-REPEAT REGION OF PRORP DOMAIN-CONTAINING PROTEIN"/>
    <property type="match status" value="1"/>
</dbReference>
<dbReference type="PANTHER" id="PTHR47938">
    <property type="entry name" value="RESPIRATORY COMPLEX I CHAPERONE (CIA84), PUTATIVE (AFU_ORTHOLOGUE AFUA_2G06020)-RELATED"/>
    <property type="match status" value="1"/>
</dbReference>
<dbReference type="Pfam" id="PF12854">
    <property type="entry name" value="PPR_1"/>
    <property type="match status" value="1"/>
</dbReference>
<dbReference type="Pfam" id="PF13041">
    <property type="entry name" value="PPR_2"/>
    <property type="match status" value="5"/>
</dbReference>
<dbReference type="SUPFAM" id="SSF81901">
    <property type="entry name" value="HCP-like"/>
    <property type="match status" value="1"/>
</dbReference>
<dbReference type="PROSITE" id="PS51375">
    <property type="entry name" value="PPR"/>
    <property type="match status" value="16"/>
</dbReference>
<protein>
    <recommendedName>
        <fullName>Pentatricopeptide repeat-containing protein At5g61400</fullName>
    </recommendedName>
</protein>
<comment type="similarity">
    <text evidence="1">Belongs to the PPR family. P subfamily.</text>
</comment>
<comment type="online information" name="Pentatricopeptide repeat proteins">
    <link uri="https://ppr.plantenergy.uwa.edu.au"/>
</comment>
<accession>Q9FLJ4</accession>
<name>PP440_ARATH</name>
<keyword id="KW-1185">Reference proteome</keyword>
<keyword id="KW-0677">Repeat</keyword>
<reference key="1">
    <citation type="journal article" date="1998" name="DNA Res.">
        <title>Structural analysis of Arabidopsis thaliana chromosome 5. IV. Sequence features of the regions of 1,456,315 bp covered by nineteen physically assigned P1 and TAC clones.</title>
        <authorList>
            <person name="Sato S."/>
            <person name="Kaneko T."/>
            <person name="Kotani H."/>
            <person name="Nakamura Y."/>
            <person name="Asamizu E."/>
            <person name="Miyajima N."/>
            <person name="Tabata S."/>
        </authorList>
    </citation>
    <scope>NUCLEOTIDE SEQUENCE [LARGE SCALE GENOMIC DNA]</scope>
    <source>
        <strain>cv. Columbia</strain>
    </source>
</reference>
<reference key="2">
    <citation type="journal article" date="2017" name="Plant J.">
        <title>Araport11: a complete reannotation of the Arabidopsis thaliana reference genome.</title>
        <authorList>
            <person name="Cheng C.Y."/>
            <person name="Krishnakumar V."/>
            <person name="Chan A.P."/>
            <person name="Thibaud-Nissen F."/>
            <person name="Schobel S."/>
            <person name="Town C.D."/>
        </authorList>
    </citation>
    <scope>GENOME REANNOTATION</scope>
    <source>
        <strain>cv. Columbia</strain>
    </source>
</reference>
<reference key="3">
    <citation type="journal article" date="2004" name="Plant Cell">
        <title>Genome-wide analysis of Arabidopsis pentatricopeptide repeat proteins reveals their essential role in organelle biogenesis.</title>
        <authorList>
            <person name="Lurin C."/>
            <person name="Andres C."/>
            <person name="Aubourg S."/>
            <person name="Bellaoui M."/>
            <person name="Bitton F."/>
            <person name="Bruyere C."/>
            <person name="Caboche M."/>
            <person name="Debast C."/>
            <person name="Gualberto J."/>
            <person name="Hoffmann B."/>
            <person name="Lecharny A."/>
            <person name="Le Ret M."/>
            <person name="Martin-Magniette M.-L."/>
            <person name="Mireau H."/>
            <person name="Peeters N."/>
            <person name="Renou J.-P."/>
            <person name="Szurek B."/>
            <person name="Taconnat L."/>
            <person name="Small I."/>
        </authorList>
    </citation>
    <scope>GENE FAMILY</scope>
</reference>
<evidence type="ECO:0000305" key="1"/>
<organism>
    <name type="scientific">Arabidopsis thaliana</name>
    <name type="common">Mouse-ear cress</name>
    <dbReference type="NCBI Taxonomy" id="3702"/>
    <lineage>
        <taxon>Eukaryota</taxon>
        <taxon>Viridiplantae</taxon>
        <taxon>Streptophyta</taxon>
        <taxon>Embryophyta</taxon>
        <taxon>Tracheophyta</taxon>
        <taxon>Spermatophyta</taxon>
        <taxon>Magnoliopsida</taxon>
        <taxon>eudicotyledons</taxon>
        <taxon>Gunneridae</taxon>
        <taxon>Pentapetalae</taxon>
        <taxon>rosids</taxon>
        <taxon>malvids</taxon>
        <taxon>Brassicales</taxon>
        <taxon>Brassicaceae</taxon>
        <taxon>Camelineae</taxon>
        <taxon>Arabidopsis</taxon>
    </lineage>
</organism>
<gene>
    <name type="ordered locus">At5g61400</name>
    <name type="ORF">MFB13.18</name>
</gene>
<feature type="chain" id="PRO_0000363577" description="Pentatricopeptide repeat-containing protein At5g61400">
    <location>
        <begin position="1"/>
        <end position="654"/>
    </location>
</feature>
<feature type="repeat" description="PPR 1">
    <location>
        <begin position="37"/>
        <end position="71"/>
    </location>
</feature>
<feature type="repeat" description="PPR 2">
    <location>
        <begin position="74"/>
        <end position="104"/>
    </location>
</feature>
<feature type="repeat" description="PPR 3">
    <location>
        <begin position="131"/>
        <end position="161"/>
    </location>
</feature>
<feature type="repeat" description="PPR 4">
    <location>
        <begin position="163"/>
        <end position="197"/>
    </location>
</feature>
<feature type="repeat" description="PPR 5">
    <location>
        <begin position="198"/>
        <end position="232"/>
    </location>
</feature>
<feature type="repeat" description="PPR 6">
    <location>
        <begin position="233"/>
        <end position="267"/>
    </location>
</feature>
<feature type="repeat" description="PPR 7">
    <location>
        <begin position="268"/>
        <end position="302"/>
    </location>
</feature>
<feature type="repeat" description="PPR 8">
    <location>
        <begin position="303"/>
        <end position="337"/>
    </location>
</feature>
<feature type="repeat" description="PPR 9">
    <location>
        <begin position="338"/>
        <end position="372"/>
    </location>
</feature>
<feature type="repeat" description="PPR 10">
    <location>
        <begin position="373"/>
        <end position="407"/>
    </location>
</feature>
<feature type="repeat" description="PPR 11">
    <location>
        <begin position="408"/>
        <end position="442"/>
    </location>
</feature>
<feature type="repeat" description="PPR 12">
    <location>
        <begin position="443"/>
        <end position="477"/>
    </location>
</feature>
<feature type="repeat" description="PPR 13">
    <location>
        <begin position="478"/>
        <end position="512"/>
    </location>
</feature>
<feature type="repeat" description="PPR 14">
    <location>
        <begin position="513"/>
        <end position="543"/>
    </location>
</feature>
<feature type="repeat" description="PPR 15">
    <location>
        <begin position="548"/>
        <end position="582"/>
    </location>
</feature>
<feature type="repeat" description="PPR 16">
    <location>
        <begin position="583"/>
        <end position="617"/>
    </location>
</feature>
<sequence length="654" mass="74440">MLKLLLPQHRTSVYLFKFQFFNFRFLSQSPSLSNSASSFSSSSLAEAILKCRSAEEAFKLFETSSRSRVSKSNDLQSFSAVIHVLTGAHKYTLARCLIKSLIERLKRHSEPSNMSHRLFNALEDIQSPKFSIGVFSLLIMEFLEMGLFEEALWVSREMKCSPDSKACLSILNGLVRRRRFDSVWVDYQLMISRGLVPDVHIYFVLFQCCFKQGLYSKKEKLLDEMTSLGIKPNVYIYTIYILDLCRDNKMEEAEKMFELMKKHGVLPNLYTYSAMIDGYCKTGNVRQAYGLYKEILVAELLPNVVVFGTLVDGFCKARELVTARSLFVHMVKFGVDPNLYVYNCLIHGHCKSGNMLEAVGLLSEMESLNLSPDVFTYTILINGLCIEDQVAEANRLFQKMKNERIFPSSATYNSLIHGYCKEYNMEQALDLCSEMTASGVEPNIITFSTLIDGYCNVRDIKAAMGLYFEMTIKGIVPDVVTYTALIDAHFKEANMKEALRLYSDMLEAGIHPNDHTFACLVDGFWKEGRLSVAIDFYQENNQQRSCWNHVGFTCLIEGLCQNGYILRASRFFSDMRSCGITPDICSYVSMLKGHLQEKRITDTMMLQCDMIKTGILPNLLVNQLLARFYQANGYVKSACFLTNSSRLKTVSNSC</sequence>
<proteinExistence type="evidence at transcript level"/>